<proteinExistence type="inferred from homology"/>
<name>RS6_MARMM</name>
<protein>
    <recommendedName>
        <fullName evidence="1">Small ribosomal subunit protein bS6</fullName>
    </recommendedName>
    <alternativeName>
        <fullName evidence="3">30S ribosomal protein S6</fullName>
    </alternativeName>
</protein>
<organism>
    <name type="scientific">Maricaulis maris (strain MCS10)</name>
    <name type="common">Caulobacter maris</name>
    <dbReference type="NCBI Taxonomy" id="394221"/>
    <lineage>
        <taxon>Bacteria</taxon>
        <taxon>Pseudomonadati</taxon>
        <taxon>Pseudomonadota</taxon>
        <taxon>Alphaproteobacteria</taxon>
        <taxon>Maricaulales</taxon>
        <taxon>Maricaulaceae</taxon>
        <taxon>Maricaulis</taxon>
    </lineage>
</organism>
<dbReference type="EMBL" id="CP000449">
    <property type="protein sequence ID" value="ABI65505.1"/>
    <property type="molecule type" value="Genomic_DNA"/>
</dbReference>
<dbReference type="RefSeq" id="WP_011643152.1">
    <property type="nucleotide sequence ID" value="NC_008347.1"/>
</dbReference>
<dbReference type="SMR" id="Q0AQD2"/>
<dbReference type="STRING" id="394221.Mmar10_1212"/>
<dbReference type="KEGG" id="mmr:Mmar10_1212"/>
<dbReference type="eggNOG" id="COG0360">
    <property type="taxonomic scope" value="Bacteria"/>
</dbReference>
<dbReference type="HOGENOM" id="CLU_113441_2_0_5"/>
<dbReference type="OrthoDB" id="9812702at2"/>
<dbReference type="Proteomes" id="UP000001964">
    <property type="component" value="Chromosome"/>
</dbReference>
<dbReference type="GO" id="GO:0022627">
    <property type="term" value="C:cytosolic small ribosomal subunit"/>
    <property type="evidence" value="ECO:0007669"/>
    <property type="project" value="TreeGrafter"/>
</dbReference>
<dbReference type="GO" id="GO:0070181">
    <property type="term" value="F:small ribosomal subunit rRNA binding"/>
    <property type="evidence" value="ECO:0007669"/>
    <property type="project" value="TreeGrafter"/>
</dbReference>
<dbReference type="GO" id="GO:0003735">
    <property type="term" value="F:structural constituent of ribosome"/>
    <property type="evidence" value="ECO:0007669"/>
    <property type="project" value="InterPro"/>
</dbReference>
<dbReference type="GO" id="GO:0006412">
    <property type="term" value="P:translation"/>
    <property type="evidence" value="ECO:0007669"/>
    <property type="project" value="UniProtKB-UniRule"/>
</dbReference>
<dbReference type="CDD" id="cd00473">
    <property type="entry name" value="bS6"/>
    <property type="match status" value="1"/>
</dbReference>
<dbReference type="Gene3D" id="3.30.70.60">
    <property type="match status" value="1"/>
</dbReference>
<dbReference type="HAMAP" id="MF_00360">
    <property type="entry name" value="Ribosomal_bS6"/>
    <property type="match status" value="1"/>
</dbReference>
<dbReference type="InterPro" id="IPR000529">
    <property type="entry name" value="Ribosomal_bS6"/>
</dbReference>
<dbReference type="InterPro" id="IPR020815">
    <property type="entry name" value="Ribosomal_bS6_CS"/>
</dbReference>
<dbReference type="InterPro" id="IPR035980">
    <property type="entry name" value="Ribosomal_bS6_sf"/>
</dbReference>
<dbReference type="InterPro" id="IPR020814">
    <property type="entry name" value="Ribosomal_S6_plastid/chlpt"/>
</dbReference>
<dbReference type="InterPro" id="IPR014717">
    <property type="entry name" value="Transl_elong_EF1B/ribsomal_bS6"/>
</dbReference>
<dbReference type="NCBIfam" id="TIGR00166">
    <property type="entry name" value="S6"/>
    <property type="match status" value="1"/>
</dbReference>
<dbReference type="PANTHER" id="PTHR21011">
    <property type="entry name" value="MITOCHONDRIAL 28S RIBOSOMAL PROTEIN S6"/>
    <property type="match status" value="1"/>
</dbReference>
<dbReference type="PANTHER" id="PTHR21011:SF1">
    <property type="entry name" value="SMALL RIBOSOMAL SUBUNIT PROTEIN BS6M"/>
    <property type="match status" value="1"/>
</dbReference>
<dbReference type="Pfam" id="PF01250">
    <property type="entry name" value="Ribosomal_S6"/>
    <property type="match status" value="1"/>
</dbReference>
<dbReference type="SUPFAM" id="SSF54995">
    <property type="entry name" value="Ribosomal protein S6"/>
    <property type="match status" value="1"/>
</dbReference>
<dbReference type="PROSITE" id="PS01048">
    <property type="entry name" value="RIBOSOMAL_S6"/>
    <property type="match status" value="1"/>
</dbReference>
<reference key="1">
    <citation type="submission" date="2006-08" db="EMBL/GenBank/DDBJ databases">
        <title>Complete sequence of Maricaulis maris MCS10.</title>
        <authorList>
            <consortium name="US DOE Joint Genome Institute"/>
            <person name="Copeland A."/>
            <person name="Lucas S."/>
            <person name="Lapidus A."/>
            <person name="Barry K."/>
            <person name="Detter J.C."/>
            <person name="Glavina del Rio T."/>
            <person name="Hammon N."/>
            <person name="Israni S."/>
            <person name="Dalin E."/>
            <person name="Tice H."/>
            <person name="Pitluck S."/>
            <person name="Saunders E."/>
            <person name="Brettin T."/>
            <person name="Bruce D."/>
            <person name="Han C."/>
            <person name="Tapia R."/>
            <person name="Gilna P."/>
            <person name="Schmutz J."/>
            <person name="Larimer F."/>
            <person name="Land M."/>
            <person name="Hauser L."/>
            <person name="Kyrpides N."/>
            <person name="Mikhailova N."/>
            <person name="Viollier P."/>
            <person name="Stephens C."/>
            <person name="Richardson P."/>
        </authorList>
    </citation>
    <scope>NUCLEOTIDE SEQUENCE [LARGE SCALE GENOMIC DNA]</scope>
    <source>
        <strain>MCS10</strain>
    </source>
</reference>
<evidence type="ECO:0000255" key="1">
    <source>
        <dbReference type="HAMAP-Rule" id="MF_00360"/>
    </source>
</evidence>
<evidence type="ECO:0000256" key="2">
    <source>
        <dbReference type="SAM" id="MobiDB-lite"/>
    </source>
</evidence>
<evidence type="ECO:0000305" key="3"/>
<feature type="chain" id="PRO_1000005293" description="Small ribosomal subunit protein bS6">
    <location>
        <begin position="1"/>
        <end position="117"/>
    </location>
</feature>
<feature type="region of interest" description="Disordered" evidence="2">
    <location>
        <begin position="97"/>
        <end position="117"/>
    </location>
</feature>
<comment type="function">
    <text evidence="1">Binds together with bS18 to 16S ribosomal RNA.</text>
</comment>
<comment type="similarity">
    <text evidence="1">Belongs to the bacterial ribosomal protein bS6 family.</text>
</comment>
<sequence>MALYEHIFIVRPDVSPAQMESLLEETKALIEEKGGKTGKIEYWGLRNLSYRINKSRKGHYGLIDIDAEADVINELERLQRLSEDVIRHMTLRVEAHTEEPSAILTKKDDRRGRRERN</sequence>
<gene>
    <name evidence="1" type="primary">rpsF</name>
    <name type="ordered locus">Mmar10_1212</name>
</gene>
<accession>Q0AQD2</accession>
<keyword id="KW-1185">Reference proteome</keyword>
<keyword id="KW-0687">Ribonucleoprotein</keyword>
<keyword id="KW-0689">Ribosomal protein</keyword>
<keyword id="KW-0694">RNA-binding</keyword>
<keyword id="KW-0699">rRNA-binding</keyword>